<reference key="1">
    <citation type="journal article" date="2009" name="Mol. Microbiol.">
        <title>An ssDNA virus infecting archaea: a new lineage of viruses with a membrane envelope.</title>
        <authorList>
            <person name="Pietila M.K."/>
            <person name="Roine E."/>
            <person name="Paulin L."/>
            <person name="Kalkkinen N."/>
            <person name="Bamford D.H."/>
        </authorList>
    </citation>
    <scope>NUCLEOTIDE SEQUENCE [GENOMIC DNA]</scope>
</reference>
<accession>C1JJY0</accession>
<dbReference type="EMBL" id="FJ685651">
    <property type="protein sequence ID" value="ACO54896.1"/>
    <property type="molecule type" value="Genomic_DNA"/>
</dbReference>
<dbReference type="RefSeq" id="YP_002791886.1">
    <property type="nucleotide sequence ID" value="NC_012558.1"/>
</dbReference>
<dbReference type="KEGG" id="vg:7755270"/>
<dbReference type="Proteomes" id="UP000009401">
    <property type="component" value="Genome"/>
</dbReference>
<dbReference type="GO" id="GO:0000166">
    <property type="term" value="F:nucleotide binding"/>
    <property type="evidence" value="ECO:0007669"/>
    <property type="project" value="InterPro"/>
</dbReference>
<dbReference type="Gene3D" id="1.10.150.20">
    <property type="entry name" value="5' to 3' exonuclease, C-terminal subdomain"/>
    <property type="match status" value="1"/>
</dbReference>
<dbReference type="InterPro" id="IPR010995">
    <property type="entry name" value="DNA_repair_Rad51/TF_NusA_a-hlx"/>
</dbReference>
<dbReference type="Pfam" id="PF14520">
    <property type="entry name" value="HHH_5"/>
    <property type="match status" value="1"/>
</dbReference>
<dbReference type="SUPFAM" id="SSF47794">
    <property type="entry name" value="Rad51 N-terminal domain-like"/>
    <property type="match status" value="1"/>
</dbReference>
<sequence length="500" mass="57028">MSHNDTPANNTNGIADVYADENPCEIAGEDNPPQPYSCFDGEDRAHDKTRIIKWLCYHPKGVPLARTVKALFPDDSEKRISERSYTSTDYNFVSRFLERTGYAVLDSEAGLIEASPTSRAFHLTLESKIPSEHTTNYAKDRAEACAYGMWSLNDVENARLLAKDFTTYLESIHDRRLMLENVDNPDMKLTMPYHTRFNDDRRKAEQWARYNSAWEAADDKYSSGVMVTLTTDPKRYDSIGEMLDGLMDAWQNLHETLNQRYLEGTRLDFIRALEFGGSEKSNHIGLPHLHVCVFGVPYIDHRWLKHYWSSKHAEIVHIHGMNKRGNDSWIMTSGTHAGKSVAGYLGKYLSKTFERIADDPDELREHYQSWSEGGDWANSELWKLALYWATGRQFWASSHDLKDDSRNFDTLQEVPGLGETKLDRLEAHGIQTLSDVRLASVDEIASIDGISESFAEKLKDLVGEPSEFDVFRFEFRGAARYEEMPASWSHARHLGVSACG</sequence>
<name>ORF1_HAPV1</name>
<gene>
    <name type="ORF">ORF1</name>
</gene>
<proteinExistence type="predicted"/>
<organismHost>
    <name type="scientific">Halorubrum sp. PV6</name>
    <dbReference type="NCBI Taxonomy" id="634157"/>
</organismHost>
<organism>
    <name type="scientific">Halorubrum pleomorphic virus 1</name>
    <name type="common">HRPV-1</name>
    <dbReference type="NCBI Taxonomy" id="634168"/>
    <lineage>
        <taxon>Viruses</taxon>
        <taxon>Monodnaviria</taxon>
        <taxon>Trapavirae</taxon>
        <taxon>Saleviricota</taxon>
        <taxon>Huolimaviricetes</taxon>
        <taxon>Haloruvirales</taxon>
        <taxon>Pleolipoviridae</taxon>
        <taxon>Alphapleolipovirus</taxon>
        <taxon>Alphapleolipovirus finnoniense</taxon>
    </lineage>
</organism>
<feature type="chain" id="PRO_0000420962" description="Uncharacterized protein 1">
    <location>
        <begin position="1"/>
        <end position="500"/>
    </location>
</feature>
<protein>
    <recommendedName>
        <fullName>Uncharacterized protein 1</fullName>
    </recommendedName>
</protein>
<keyword id="KW-1185">Reference proteome</keyword>